<comment type="function">
    <text evidence="1">Binds 16S rRNA, required for the assembly of 30S particles and may also be responsible for determining the conformation of the 16S rRNA at the A site.</text>
</comment>
<comment type="subunit">
    <text evidence="1">Part of the 30S ribosomal subunit. Contacts proteins S3 and S10.</text>
</comment>
<comment type="similarity">
    <text evidence="1">Belongs to the universal ribosomal protein uS14 family.</text>
</comment>
<evidence type="ECO:0000255" key="1">
    <source>
        <dbReference type="HAMAP-Rule" id="MF_00537"/>
    </source>
</evidence>
<evidence type="ECO:0000305" key="2"/>
<protein>
    <recommendedName>
        <fullName evidence="1">Small ribosomal subunit protein uS14A</fullName>
    </recommendedName>
    <alternativeName>
        <fullName evidence="2">30S ribosomal protein S14</fullName>
    </alternativeName>
</protein>
<feature type="chain" id="PRO_1000128601" description="Small ribosomal subunit protein uS14A">
    <location>
        <begin position="1"/>
        <end position="89"/>
    </location>
</feature>
<dbReference type="EMBL" id="AP009351">
    <property type="protein sequence ID" value="BAF67520.1"/>
    <property type="molecule type" value="Genomic_DNA"/>
</dbReference>
<dbReference type="RefSeq" id="WP_001085655.1">
    <property type="nucleotide sequence ID" value="NZ_JBBIAE010000001.1"/>
</dbReference>
<dbReference type="SMR" id="A6QGN8"/>
<dbReference type="GeneID" id="98345705"/>
<dbReference type="KEGG" id="sae:NWMN_1248"/>
<dbReference type="HOGENOM" id="CLU_139869_0_0_9"/>
<dbReference type="Proteomes" id="UP000006386">
    <property type="component" value="Chromosome"/>
</dbReference>
<dbReference type="GO" id="GO:0005737">
    <property type="term" value="C:cytoplasm"/>
    <property type="evidence" value="ECO:0007669"/>
    <property type="project" value="UniProtKB-ARBA"/>
</dbReference>
<dbReference type="GO" id="GO:0015935">
    <property type="term" value="C:small ribosomal subunit"/>
    <property type="evidence" value="ECO:0007669"/>
    <property type="project" value="TreeGrafter"/>
</dbReference>
<dbReference type="GO" id="GO:0019843">
    <property type="term" value="F:rRNA binding"/>
    <property type="evidence" value="ECO:0007669"/>
    <property type="project" value="UniProtKB-UniRule"/>
</dbReference>
<dbReference type="GO" id="GO:0003735">
    <property type="term" value="F:structural constituent of ribosome"/>
    <property type="evidence" value="ECO:0007669"/>
    <property type="project" value="InterPro"/>
</dbReference>
<dbReference type="GO" id="GO:0006412">
    <property type="term" value="P:translation"/>
    <property type="evidence" value="ECO:0007669"/>
    <property type="project" value="UniProtKB-UniRule"/>
</dbReference>
<dbReference type="FunFam" id="4.10.830.10:FF:000003">
    <property type="entry name" value="30S ribosomal protein S14"/>
    <property type="match status" value="1"/>
</dbReference>
<dbReference type="Gene3D" id="4.10.830.10">
    <property type="entry name" value="30s Ribosomal Protein S14, Chain N"/>
    <property type="match status" value="1"/>
</dbReference>
<dbReference type="HAMAP" id="MF_00537">
    <property type="entry name" value="Ribosomal_uS14_1"/>
    <property type="match status" value="1"/>
</dbReference>
<dbReference type="InterPro" id="IPR001209">
    <property type="entry name" value="Ribosomal_uS14"/>
</dbReference>
<dbReference type="InterPro" id="IPR023036">
    <property type="entry name" value="Ribosomal_uS14_bac/plastid"/>
</dbReference>
<dbReference type="InterPro" id="IPR018271">
    <property type="entry name" value="Ribosomal_uS14_CS"/>
</dbReference>
<dbReference type="InterPro" id="IPR043140">
    <property type="entry name" value="Ribosomal_uS14_sf"/>
</dbReference>
<dbReference type="NCBIfam" id="NF006477">
    <property type="entry name" value="PRK08881.1"/>
    <property type="match status" value="1"/>
</dbReference>
<dbReference type="PANTHER" id="PTHR19836">
    <property type="entry name" value="30S RIBOSOMAL PROTEIN S14"/>
    <property type="match status" value="1"/>
</dbReference>
<dbReference type="PANTHER" id="PTHR19836:SF19">
    <property type="entry name" value="SMALL RIBOSOMAL SUBUNIT PROTEIN US14M"/>
    <property type="match status" value="1"/>
</dbReference>
<dbReference type="Pfam" id="PF00253">
    <property type="entry name" value="Ribosomal_S14"/>
    <property type="match status" value="1"/>
</dbReference>
<dbReference type="SUPFAM" id="SSF57716">
    <property type="entry name" value="Glucocorticoid receptor-like (DNA-binding domain)"/>
    <property type="match status" value="1"/>
</dbReference>
<dbReference type="PROSITE" id="PS00527">
    <property type="entry name" value="RIBOSOMAL_S14"/>
    <property type="match status" value="1"/>
</dbReference>
<keyword id="KW-0687">Ribonucleoprotein</keyword>
<keyword id="KW-0689">Ribosomal protein</keyword>
<keyword id="KW-0694">RNA-binding</keyword>
<keyword id="KW-0699">rRNA-binding</keyword>
<reference key="1">
    <citation type="journal article" date="2008" name="J. Bacteriol.">
        <title>Genome sequence of Staphylococcus aureus strain Newman and comparative analysis of staphylococcal genomes: polymorphism and evolution of two major pathogenicity islands.</title>
        <authorList>
            <person name="Baba T."/>
            <person name="Bae T."/>
            <person name="Schneewind O."/>
            <person name="Takeuchi F."/>
            <person name="Hiramatsu K."/>
        </authorList>
    </citation>
    <scope>NUCLEOTIDE SEQUENCE [LARGE SCALE GENOMIC DNA]</scope>
    <source>
        <strain>Newman</strain>
    </source>
</reference>
<organism>
    <name type="scientific">Staphylococcus aureus (strain Newman)</name>
    <dbReference type="NCBI Taxonomy" id="426430"/>
    <lineage>
        <taxon>Bacteria</taxon>
        <taxon>Bacillati</taxon>
        <taxon>Bacillota</taxon>
        <taxon>Bacilli</taxon>
        <taxon>Bacillales</taxon>
        <taxon>Staphylococcaceae</taxon>
        <taxon>Staphylococcus</taxon>
    </lineage>
</organism>
<accession>A6QGN8</accession>
<gene>
    <name evidence="1" type="primary">rpsN</name>
    <name type="ordered locus">NWMN_1248</name>
</gene>
<proteinExistence type="inferred from homology"/>
<name>RS14_STAAE</name>
<sequence>MAKKSKIAKERKREELVNKYYELRKELKAKGDYEALRKLPRDSSPTRLTRRCKVTGRPRGVLRKFEMSRIAFREHAHKGQIPGVKKSSW</sequence>